<gene>
    <name evidence="10" type="primary">RTTN</name>
</gene>
<name>RTTN_HUMAN</name>
<evidence type="ECO:0000256" key="1">
    <source>
        <dbReference type="SAM" id="MobiDB-lite"/>
    </source>
</evidence>
<evidence type="ECO:0000269" key="2">
    <source>
    </source>
</evidence>
<evidence type="ECO:0000269" key="3">
    <source>
    </source>
</evidence>
<evidence type="ECO:0000269" key="4">
    <source>
    </source>
</evidence>
<evidence type="ECO:0000269" key="5">
    <source>
    </source>
</evidence>
<evidence type="ECO:0000303" key="6">
    <source>
    </source>
</evidence>
<evidence type="ECO:0000303" key="7">
    <source>
    </source>
</evidence>
<evidence type="ECO:0000303" key="8">
    <source>
    </source>
</evidence>
<evidence type="ECO:0000305" key="9"/>
<evidence type="ECO:0000312" key="10">
    <source>
        <dbReference type="HGNC" id="HGNC:18654"/>
    </source>
</evidence>
<evidence type="ECO:0007744" key="11">
    <source>
    </source>
</evidence>
<evidence type="ECO:0007744" key="12">
    <source>
    </source>
</evidence>
<dbReference type="EMBL" id="AK096404">
    <property type="status" value="NOT_ANNOTATED_CDS"/>
    <property type="molecule type" value="mRNA"/>
</dbReference>
<dbReference type="EMBL" id="AK126538">
    <property type="protein sequence ID" value="BAC86583.1"/>
    <property type="status" value="ALT_INIT"/>
    <property type="molecule type" value="mRNA"/>
</dbReference>
<dbReference type="EMBL" id="AK128137">
    <property type="protein sequence ID" value="BAC87292.1"/>
    <property type="status" value="ALT_SEQ"/>
    <property type="molecule type" value="mRNA"/>
</dbReference>
<dbReference type="EMBL" id="AC011930">
    <property type="status" value="NOT_ANNOTATED_CDS"/>
    <property type="molecule type" value="Genomic_DNA"/>
</dbReference>
<dbReference type="EMBL" id="AC021701">
    <property type="status" value="NOT_ANNOTATED_CDS"/>
    <property type="molecule type" value="Genomic_DNA"/>
</dbReference>
<dbReference type="EMBL" id="AL117635">
    <property type="protein sequence ID" value="CAB56025.2"/>
    <property type="molecule type" value="mRNA"/>
</dbReference>
<dbReference type="EMBL" id="CR749799">
    <property type="protein sequence ID" value="CAH18659.1"/>
    <property type="status" value="ALT_INIT"/>
    <property type="molecule type" value="mRNA"/>
</dbReference>
<dbReference type="EMBL" id="BC007359">
    <property type="protein sequence ID" value="AAH07359.2"/>
    <property type="molecule type" value="mRNA"/>
</dbReference>
<dbReference type="EMBL" id="BC026879">
    <property type="protein sequence ID" value="AAH26879.1"/>
    <property type="molecule type" value="mRNA"/>
</dbReference>
<dbReference type="EMBL" id="BC046222">
    <property type="protein sequence ID" value="AAH46222.2"/>
    <property type="molecule type" value="mRNA"/>
</dbReference>
<dbReference type="EMBL" id="BC047602">
    <property type="protein sequence ID" value="AAH47602.1"/>
    <property type="molecule type" value="mRNA"/>
</dbReference>
<dbReference type="CCDS" id="CCDS42443.1">
    <molecule id="Q86VV8-1"/>
</dbReference>
<dbReference type="PIR" id="T17335">
    <property type="entry name" value="T17335"/>
</dbReference>
<dbReference type="RefSeq" id="NP_001305449.1">
    <property type="nucleotide sequence ID" value="NM_001318520.1"/>
</dbReference>
<dbReference type="RefSeq" id="NP_775901.3">
    <molecule id="Q86VV8-1"/>
    <property type="nucleotide sequence ID" value="NM_173630.3"/>
</dbReference>
<dbReference type="SMR" id="Q86VV8"/>
<dbReference type="BioGRID" id="117418">
    <property type="interactions" value="24"/>
</dbReference>
<dbReference type="FunCoup" id="Q86VV8">
    <property type="interactions" value="986"/>
</dbReference>
<dbReference type="IntAct" id="Q86VV8">
    <property type="interactions" value="8"/>
</dbReference>
<dbReference type="STRING" id="9606.ENSP00000491507"/>
<dbReference type="GlyGen" id="Q86VV8">
    <property type="glycosylation" value="2 sites, 1 O-linked glycan (1 site)"/>
</dbReference>
<dbReference type="iPTMnet" id="Q86VV8"/>
<dbReference type="PhosphoSitePlus" id="Q86VV8"/>
<dbReference type="SwissPalm" id="Q86VV8"/>
<dbReference type="BioMuta" id="RTTN"/>
<dbReference type="DMDM" id="296452975"/>
<dbReference type="jPOST" id="Q86VV8"/>
<dbReference type="MassIVE" id="Q86VV8"/>
<dbReference type="PaxDb" id="9606-ENSP00000255674"/>
<dbReference type="PeptideAtlas" id="Q86VV8"/>
<dbReference type="ProteomicsDB" id="70074">
    <molecule id="Q86VV8-1"/>
</dbReference>
<dbReference type="ProteomicsDB" id="70075">
    <molecule id="Q86VV8-2"/>
</dbReference>
<dbReference type="ProteomicsDB" id="70076">
    <molecule id="Q86VV8-3"/>
</dbReference>
<dbReference type="ProteomicsDB" id="70077">
    <molecule id="Q86VV8-4"/>
</dbReference>
<dbReference type="Pumba" id="Q86VV8"/>
<dbReference type="Antibodypedia" id="49105">
    <property type="antibodies" value="26 antibodies from 9 providers"/>
</dbReference>
<dbReference type="DNASU" id="25914"/>
<dbReference type="Ensembl" id="ENST00000255674.11">
    <molecule id="Q86VV8-3"/>
    <property type="protein sequence ID" value="ENSP00000255674.7"/>
    <property type="gene ID" value="ENSG00000176225.15"/>
</dbReference>
<dbReference type="Ensembl" id="ENST00000640769.2">
    <molecule id="Q86VV8-1"/>
    <property type="protein sequence ID" value="ENSP00000491507.1"/>
    <property type="gene ID" value="ENSG00000176225.15"/>
</dbReference>
<dbReference type="GeneID" id="25914"/>
<dbReference type="KEGG" id="hsa:25914"/>
<dbReference type="MANE-Select" id="ENST00000640769.2">
    <property type="protein sequence ID" value="ENSP00000491507.1"/>
    <property type="RefSeq nucleotide sequence ID" value="NM_173630.4"/>
    <property type="RefSeq protein sequence ID" value="NP_775901.3"/>
</dbReference>
<dbReference type="UCSC" id="uc002lkp.4">
    <molecule id="Q86VV8-1"/>
    <property type="organism name" value="human"/>
</dbReference>
<dbReference type="AGR" id="HGNC:18654"/>
<dbReference type="CTD" id="25914"/>
<dbReference type="DisGeNET" id="25914"/>
<dbReference type="GeneCards" id="RTTN"/>
<dbReference type="HGNC" id="HGNC:18654">
    <property type="gene designation" value="RTTN"/>
</dbReference>
<dbReference type="HPA" id="ENSG00000176225">
    <property type="expression patterns" value="Low tissue specificity"/>
</dbReference>
<dbReference type="MalaCards" id="RTTN"/>
<dbReference type="MIM" id="610436">
    <property type="type" value="gene"/>
</dbReference>
<dbReference type="MIM" id="614833">
    <property type="type" value="phenotype"/>
</dbReference>
<dbReference type="neXtProt" id="NX_Q86VV8"/>
<dbReference type="OpenTargets" id="ENSG00000176225"/>
<dbReference type="Orphanet" id="468631">
    <property type="disease" value="Microcephalic cortical malformations-short stature due to RTTN deficiency"/>
</dbReference>
<dbReference type="PharmGKB" id="PA38622"/>
<dbReference type="VEuPathDB" id="HostDB:ENSG00000176225"/>
<dbReference type="eggNOG" id="ENOG502QPM7">
    <property type="taxonomic scope" value="Eukaryota"/>
</dbReference>
<dbReference type="GeneTree" id="ENSGT00640000091535"/>
<dbReference type="HOGENOM" id="CLU_001318_0_0_1"/>
<dbReference type="InParanoid" id="Q86VV8"/>
<dbReference type="OMA" id="FCKCVGL"/>
<dbReference type="OrthoDB" id="428850at2759"/>
<dbReference type="PAN-GO" id="Q86VV8">
    <property type="GO annotations" value="5 GO annotations based on evolutionary models"/>
</dbReference>
<dbReference type="PhylomeDB" id="Q86VV8"/>
<dbReference type="TreeFam" id="TF323508"/>
<dbReference type="PathwayCommons" id="Q86VV8"/>
<dbReference type="SignaLink" id="Q86VV8"/>
<dbReference type="BioGRID-ORCS" id="25914">
    <property type="hits" value="463 hits in 1162 CRISPR screens"/>
</dbReference>
<dbReference type="ChiTaRS" id="RTTN">
    <property type="organism name" value="human"/>
</dbReference>
<dbReference type="GenomeRNAi" id="25914"/>
<dbReference type="Pharos" id="Q86VV8">
    <property type="development level" value="Tbio"/>
</dbReference>
<dbReference type="PRO" id="PR:Q86VV8"/>
<dbReference type="Proteomes" id="UP000005640">
    <property type="component" value="Chromosome 18"/>
</dbReference>
<dbReference type="RNAct" id="Q86VV8">
    <property type="molecule type" value="protein"/>
</dbReference>
<dbReference type="Bgee" id="ENSG00000176225">
    <property type="expression patterns" value="Expressed in secondary oocyte and 163 other cell types or tissues"/>
</dbReference>
<dbReference type="ExpressionAtlas" id="Q86VV8">
    <property type="expression patterns" value="baseline and differential"/>
</dbReference>
<dbReference type="GO" id="GO:0005814">
    <property type="term" value="C:centriole"/>
    <property type="evidence" value="ECO:0000314"/>
    <property type="project" value="UniProtKB"/>
</dbReference>
<dbReference type="GO" id="GO:0005813">
    <property type="term" value="C:centrosome"/>
    <property type="evidence" value="ECO:0000314"/>
    <property type="project" value="UniProtKB"/>
</dbReference>
<dbReference type="GO" id="GO:0036064">
    <property type="term" value="C:ciliary basal body"/>
    <property type="evidence" value="ECO:0000314"/>
    <property type="project" value="UniProtKB"/>
</dbReference>
<dbReference type="GO" id="GO:0005737">
    <property type="term" value="C:cytoplasm"/>
    <property type="evidence" value="ECO:0007669"/>
    <property type="project" value="UniProtKB-KW"/>
</dbReference>
<dbReference type="GO" id="GO:0007099">
    <property type="term" value="P:centriole replication"/>
    <property type="evidence" value="ECO:0000318"/>
    <property type="project" value="GO_Central"/>
</dbReference>
<dbReference type="GO" id="GO:0010457">
    <property type="term" value="P:centriole-centriole cohesion"/>
    <property type="evidence" value="ECO:0000318"/>
    <property type="project" value="GO_Central"/>
</dbReference>
<dbReference type="GO" id="GO:0032053">
    <property type="term" value="P:ciliary basal body organization"/>
    <property type="evidence" value="ECO:0000318"/>
    <property type="project" value="GO_Central"/>
</dbReference>
<dbReference type="GO" id="GO:0007368">
    <property type="term" value="P:determination of left/right symmetry"/>
    <property type="evidence" value="ECO:0007669"/>
    <property type="project" value="Ensembl"/>
</dbReference>
<dbReference type="FunFam" id="1.25.10.10:FF:000811">
    <property type="entry name" value="rotatin isoform X1"/>
    <property type="match status" value="1"/>
</dbReference>
<dbReference type="Gene3D" id="1.25.10.10">
    <property type="entry name" value="Leucine-rich Repeat Variant"/>
    <property type="match status" value="1"/>
</dbReference>
<dbReference type="InterPro" id="IPR011989">
    <property type="entry name" value="ARM-like"/>
</dbReference>
<dbReference type="InterPro" id="IPR016024">
    <property type="entry name" value="ARM-type_fold"/>
</dbReference>
<dbReference type="InterPro" id="IPR030791">
    <property type="entry name" value="Rotatin"/>
</dbReference>
<dbReference type="InterPro" id="IPR029249">
    <property type="entry name" value="Rotatin_N"/>
</dbReference>
<dbReference type="PANTHER" id="PTHR31691">
    <property type="entry name" value="ROTATIN"/>
    <property type="match status" value="1"/>
</dbReference>
<dbReference type="PANTHER" id="PTHR31691:SF1">
    <property type="entry name" value="ROTATIN"/>
    <property type="match status" value="1"/>
</dbReference>
<dbReference type="Pfam" id="PF14726">
    <property type="entry name" value="RTTN_N"/>
    <property type="match status" value="1"/>
</dbReference>
<dbReference type="SUPFAM" id="SSF48371">
    <property type="entry name" value="ARM repeat"/>
    <property type="match status" value="4"/>
</dbReference>
<comment type="function">
    <text evidence="4">Involved in the genetic cascade that governs left-right specification. Plays a role in the maintenance of a normal ciliary structure. Required for correct asymmetric expression of NODAL, LEFTY and PITX2.</text>
</comment>
<comment type="subunit">
    <text evidence="5">Interacts with PPP1R35; this interaction allows the mutual recruitment to the centriole.</text>
</comment>
<comment type="subcellular location">
    <subcellularLocation>
        <location evidence="4">Cytoplasm</location>
        <location evidence="4">Cytoskeleton</location>
        <location evidence="4">Cilium basal body</location>
    </subcellularLocation>
    <subcellularLocation>
        <location evidence="2">Cytoplasm</location>
        <location evidence="2">Cytoskeleton</location>
        <location evidence="2">Microtubule organizing center</location>
        <location evidence="2">Centrosome</location>
    </subcellularLocation>
    <text>Colocalizes with the basal bodies at the primary cilium.</text>
</comment>
<comment type="alternative products">
    <event type="alternative splicing"/>
    <isoform>
        <id>Q86VV8-1</id>
        <name>1</name>
        <sequence type="displayed"/>
    </isoform>
    <isoform>
        <id>Q86VV8-2</id>
        <name>2</name>
        <sequence type="described" ref="VSP_029024 VSP_029025"/>
    </isoform>
    <isoform>
        <id>Q86VV8-3</id>
        <name>3</name>
        <sequence type="described" ref="VSP_029030 VSP_029031"/>
    </isoform>
    <isoform>
        <id>Q86VV8-4</id>
        <name>4</name>
        <sequence type="described" ref="VSP_029026 VSP_029027"/>
    </isoform>
</comment>
<comment type="disease" evidence="4">
    <disease id="DI-03556">
        <name>Microcephaly, short stature, and polymicrogyria with or without seizures</name>
        <acronym>MSSP</acronym>
        <description>A disease characterized by many irregular small gyri in the brain surface and fusion of the molecular layer over multiple small gyri, which gives a festooned appearance to the cortical surface, without abnormal neuronal migration. Polymicrogyria is a heterogeneous disorder, considered to be the result of postmigratory abnormal cortical organization. MSSP patients have moderate to severe intellectual disability, poor speech, dysarthria and seizures.</description>
        <dbReference type="MIM" id="614833"/>
    </disease>
    <text>The disease is caused by variants affecting the gene represented in this entry.</text>
</comment>
<comment type="miscellaneous">
    <molecule>Isoform 2</molecule>
    <text evidence="9">May be due to an intron retention.</text>
</comment>
<comment type="miscellaneous">
    <molecule>Isoform 4</molecule>
    <text evidence="9">May be produced at very low levels due to a premature stop codon in the mRNA, leading to nonsense-mediated mRNA decay.</text>
</comment>
<comment type="similarity">
    <text evidence="9">Belongs to the rotatin family.</text>
</comment>
<comment type="sequence caution" evidence="9">
    <conflict type="erroneous initiation">
        <sequence resource="EMBL-CDS" id="BAC86583"/>
    </conflict>
    <text>Truncated N-terminus.</text>
</comment>
<comment type="sequence caution" evidence="9">
    <conflict type="erroneous initiation">
        <sequence resource="EMBL-CDS" id="BAC87292"/>
    </conflict>
    <text>Truncated N-terminus.</text>
</comment>
<comment type="sequence caution" evidence="9">
    <conflict type="miscellaneous discrepancy">
        <sequence resource="EMBL-CDS" id="BAC87292"/>
    </conflict>
    <text>Aberrant splicing.</text>
</comment>
<comment type="sequence caution" evidence="9">
    <conflict type="erroneous initiation">
        <sequence resource="EMBL-CDS" id="CAH18659"/>
    </conflict>
    <text>Truncated N-terminus.</text>
</comment>
<sequence>MVLAGLIRKLGHQLAEIRERALKSILCKIEHNLICYADLIQERQLFLHLLEWFNFPSVPMKEEVLNLLSRLVKYPPAVQHLVDVGAVEFLSKLRSNVEPNLQAEIDGILDGLFLLPSEVPALSSASYQTNQTELSKNPEILTGYFPQDKSNFQQMEVPPRPVVNQTVKCLKFSTFPWLPLTTTDRHVLSSNESSLRSSNHTLIWNTCELLKDVIMQDFPAEIFLQRPKIVQSLLSLLKLAFGDGKHRLALQSVSCLQQLCMYLRNRLNFHRDPGFFSNKHDTVSQNSSLSYCHEARGTHHSQNPSPGSSSPRPSVVGRTGQRPRGDGQDWDAASSSGSSSHAHVNSRISVHSPLDMGHIDLPELETEDTLELQFQQLSLPQFCVSILESAVPLLRTGSRQVIIRVLELLTEDMTLIGEAISTDIWDDSSLFGIDMKEKLLLVLGALGETMCYHKSSISLEQPEVMLVHHRMAFISISLFAVRLLQTLLPVEKASEFLSEPMSTALFLLSLDMPISLEYPNIHEAVVAYLEQLNSENYSIYKRTAEAVYSIECTCNFLSDIGKEGEKNLLELVELADQALRSFSYHQHFPLIKEIISICSKIWKSAQASPLLQGESQKVLLHMLSHPLPRVKAETYHCCLEITKECLGVHNVTKPVSSLCNGIHFLLHPKVLYEISVFGIQEPESEVNTAAKAILLYLLQGRLMMTALTWNKFIESLCPVIPILQGYADTEDPLGNCILLLSKASSDTEEMLPCTTRLKSMLRLLLVKKPSVRSLALKLLAFHLTSEEGADTKRPLIDARVLSRVTDLFIGKKPIELRLDDRRELVIKLETVEKVYEIFTSDDVDLVLRKSAAEQLAVIMQDIKMHAVVKKLCLIDKIIEYLNECVSQDGKVVECLVQPCLTLLRKVLCGDPVMRVSLSQQSSLLTVLFRVSLIFHEDCSVVTEVGALFCLLLFDEVSRMDMWSVNPSNKPSLPSVFSLPVSVFRRYHLPVHVIGHHAVSPYSIVLPLSADCLALKPVSDMLRIAWNLSWYHGSDNLLKQMNSETKTQEILDALKLSTEDILTLKITHMASGLQDCLHSIVQAATHREVRAAVTRMSFYLLNDRLSLKGCPGPCGVTLKSLAWHTALNRFLQVLPACTEDEKLLIDIIHFLNKLIKEQRKNSSLELLNWILELLLRHSANPLLDLLVLTESQAREETDDIRTAVRQQLQKELIALFDTLLLNFMEVTDRKCSELLYVFQTQLALKLLQCLKVTDAPHFYGLPSLERTLRGMANLTAFPGWSSHSPLTKPLDICVKYLSGLLEVITSFYVERGGNAMSFMGKGVTKSTILCLLHLSHEMMAQAGSLEWMSLWFLPLGSHSEEHIPTQQGLAWLIPLWVDRDPEVRFTSLGLGSALTTLETGCVALANSCQNISGGLWGTVVNILLDQSECSMVRREAAFILQNLLVIPMPTEIIKDYTWQGPCVHDEDSGLSLIGKPALQALLYHCHFYEHLNQMVKHCYLGRCMFDLNFSAFDRNSESNDLNGLDDSFKFWRAPSRTSQDRDPSSLSTSETTVAPSLGSTEFQPLVQSTTLLPEASHDQFVAQGHQESTSPRPPHDSSLSAPLPKLCVFVTPSLLSAMCSLLDNLLTIAPRDTAKAFRQAHLIELLCSIADATLIQTCVQELRALLPSSPPAEHTQAQVSFLLEYLSSLSRLLQSCLLVEPDLVIQDELVKPLITNIIGILTICTKDVLDKELISAFYHTWTHLFNLLAMLLRKAGAITLPFVTVALAKHWTAAIDMFCTCAGLSATCPALYTASLQFLSVLLTEEAKGHLQAKSKTHLCCSPTVASLLDDSQENQKSLEQLSDVILQCYEGKSSKDILKRVAANALMSLLAVSRRAQKHALKANLIDNCMEQMKHINAQLNLDSLRPGKAALKKKEDGVIKELSIAMQLLRNCLYQNEECKEAALEAHLVPVLHSLWPWILMDDSLMQISLQLLCVYTANFPNGCSSLCWSSCGQHPVQATHRGAVSNSLMLCILKLASQMPLENTTVQQMVFMLLSNLALSHDCKGVIQKSNFLQNFLSLALPKGGNKHLSNLTILWLKLLLNISSGEDGQQMILRLDGCLDLLTEMSKYKHKSSPLLPLLIFHNVCFSPANKPKILANEKVITVLAACLESENQNAQRIGAAALWALIYNYQKAKTALKSPSVKRRVDEAYSLAKKTFPNSEANPLNAYYLKCLENLVQLLNSS</sequence>
<proteinExistence type="evidence at protein level"/>
<feature type="chain" id="PRO_0000308612" description="Rotatin">
    <location>
        <begin position="1"/>
        <end position="2226"/>
    </location>
</feature>
<feature type="region of interest" description="Disordered" evidence="1">
    <location>
        <begin position="295"/>
        <end position="345"/>
    </location>
</feature>
<feature type="region of interest" description="Disordered" evidence="1">
    <location>
        <begin position="1534"/>
        <end position="1554"/>
    </location>
</feature>
<feature type="compositionally biased region" description="Low complexity" evidence="1">
    <location>
        <begin position="304"/>
        <end position="318"/>
    </location>
</feature>
<feature type="compositionally biased region" description="Low complexity" evidence="1">
    <location>
        <begin position="332"/>
        <end position="343"/>
    </location>
</feature>
<feature type="compositionally biased region" description="Polar residues" evidence="1">
    <location>
        <begin position="1543"/>
        <end position="1554"/>
    </location>
</feature>
<feature type="modified residue" description="Phosphoserine" evidence="12">
    <location>
        <position position="310"/>
    </location>
</feature>
<feature type="modified residue" description="N6-acetyllysine" evidence="11">
    <location>
        <position position="811"/>
    </location>
</feature>
<feature type="splice variant" id="VSP_029024" description="In isoform 2." evidence="6">
    <original>I</original>
    <variation>M</variation>
    <location>
        <position position="601"/>
    </location>
</feature>
<feature type="splice variant" id="VSP_029025" description="In isoform 2." evidence="6">
    <location>
        <begin position="602"/>
        <end position="2226"/>
    </location>
</feature>
<feature type="splice variant" id="VSP_029026" description="In isoform 4." evidence="8">
    <original>DIKMHAVVKKLCLIDKIIE</original>
    <variation>GCRMFGTTMPHTLEEGFMW</variation>
    <location>
        <begin position="861"/>
        <end position="879"/>
    </location>
</feature>
<feature type="splice variant" id="VSP_029027" description="In isoform 4." evidence="8">
    <location>
        <begin position="880"/>
        <end position="2226"/>
    </location>
</feature>
<feature type="splice variant" id="VSP_029030" description="In isoform 3." evidence="7 8">
    <original>F</original>
    <variation>P</variation>
    <location>
        <position position="2200"/>
    </location>
</feature>
<feature type="splice variant" id="VSP_029031" description="In isoform 3." evidence="7 8">
    <location>
        <begin position="2201"/>
        <end position="2226"/>
    </location>
</feature>
<feature type="sequence variant" id="VAR_069094" description="In MSSP; dbSNP:rs201884120." evidence="4">
    <original>C</original>
    <variation>Y</variation>
    <location>
        <position position="27"/>
    </location>
</feature>
<feature type="sequence variant" id="VAR_036848" description="In dbSNP:rs3911730." evidence="3">
    <original>S</original>
    <variation>A</variation>
    <location>
        <position position="126"/>
    </location>
</feature>
<feature type="sequence variant" id="VAR_036849" description="In dbSNP:rs17082206.">
    <original>K</original>
    <variation>R</variation>
    <location>
        <position position="245"/>
    </location>
</feature>
<feature type="sequence variant" id="VAR_069095" description="In MSSP; dbSNP:rs318240757." evidence="4">
    <original>L</original>
    <variation>F</variation>
    <location>
        <position position="932"/>
    </location>
</feature>
<feature type="sequence variant" id="VAR_036850" description="In dbSNP:rs285227.">
    <original>H</original>
    <variation>R</variation>
    <location>
        <position position="1742"/>
    </location>
</feature>
<feature type="sequence variant" id="VAR_036851" description="In dbSNP:rs4891392." evidence="3">
    <original>F</original>
    <variation>S</variation>
    <location>
        <position position="1761"/>
    </location>
</feature>
<feature type="sequence conflict" description="In Ref. 1; AK096404 and 3; CAH18659." evidence="9" ref="1 3">
    <original>F</original>
    <variation>FG</variation>
    <location>
        <position position="241"/>
    </location>
</feature>
<feature type="sequence conflict" description="In Ref. 3; CAH18659." evidence="9" ref="3">
    <original>S</original>
    <variation>P</variation>
    <location>
        <position position="385"/>
    </location>
</feature>
<feature type="sequence conflict" description="In Ref. 3; CAH18659." evidence="9" ref="3">
    <original>I</original>
    <variation>V</variation>
    <location>
        <position position="402"/>
    </location>
</feature>
<feature type="sequence conflict" description="In Ref. 3; CAH18659." evidence="9" ref="3">
    <original>T</original>
    <variation>A</variation>
    <location>
        <position position="839"/>
    </location>
</feature>
<feature type="sequence conflict" description="In Ref. 1; BAC87292." evidence="9" ref="1">
    <original>E</original>
    <variation>G</variation>
    <location>
        <position position="1359"/>
    </location>
</feature>
<feature type="sequence conflict" description="In Ref. 1; BAC86583." evidence="9" ref="1">
    <original>S</original>
    <variation>G</variation>
    <location>
        <position position="1587"/>
    </location>
</feature>
<feature type="sequence conflict" description="In Ref. 4; AAH46222." evidence="9" ref="4">
    <original>L</original>
    <variation>P</variation>
    <location>
        <position position="1934"/>
    </location>
</feature>
<feature type="sequence conflict" description="In Ref. 3; CAB56025." evidence="9" ref="3">
    <original>L</original>
    <variation>V</variation>
    <location>
        <position position="2017"/>
    </location>
</feature>
<protein>
    <recommendedName>
        <fullName evidence="9">Rotatin</fullName>
    </recommendedName>
</protein>
<keyword id="KW-0007">Acetylation</keyword>
<keyword id="KW-0025">Alternative splicing</keyword>
<keyword id="KW-0966">Cell projection</keyword>
<keyword id="KW-0969">Cilium</keyword>
<keyword id="KW-0963">Cytoplasm</keyword>
<keyword id="KW-0206">Cytoskeleton</keyword>
<keyword id="KW-0217">Developmental protein</keyword>
<keyword id="KW-0225">Disease variant</keyword>
<keyword id="KW-0597">Phosphoprotein</keyword>
<keyword id="KW-1267">Proteomics identification</keyword>
<keyword id="KW-1185">Reference proteome</keyword>
<accession>Q86VV8</accession>
<accession>Q68CS9</accession>
<accession>Q6ZRL8</accession>
<accession>Q6ZTK3</accession>
<accession>Q86TG4</accession>
<accession>Q8N8N8</accession>
<accession>Q8TBQ4</accession>
<accession>Q96IN9</accession>
<accession>Q9UFJ4</accession>
<organism>
    <name type="scientific">Homo sapiens</name>
    <name type="common">Human</name>
    <dbReference type="NCBI Taxonomy" id="9606"/>
    <lineage>
        <taxon>Eukaryota</taxon>
        <taxon>Metazoa</taxon>
        <taxon>Chordata</taxon>
        <taxon>Craniata</taxon>
        <taxon>Vertebrata</taxon>
        <taxon>Euteleostomi</taxon>
        <taxon>Mammalia</taxon>
        <taxon>Eutheria</taxon>
        <taxon>Euarchontoglires</taxon>
        <taxon>Primates</taxon>
        <taxon>Haplorrhini</taxon>
        <taxon>Catarrhini</taxon>
        <taxon>Hominidae</taxon>
        <taxon>Homo</taxon>
    </lineage>
</organism>
<reference key="1">
    <citation type="journal article" date="2004" name="Nat. Genet.">
        <title>Complete sequencing and characterization of 21,243 full-length human cDNAs.</title>
        <authorList>
            <person name="Ota T."/>
            <person name="Suzuki Y."/>
            <person name="Nishikawa T."/>
            <person name="Otsuki T."/>
            <person name="Sugiyama T."/>
            <person name="Irie R."/>
            <person name="Wakamatsu A."/>
            <person name="Hayashi K."/>
            <person name="Sato H."/>
            <person name="Nagai K."/>
            <person name="Kimura K."/>
            <person name="Makita H."/>
            <person name="Sekine M."/>
            <person name="Obayashi M."/>
            <person name="Nishi T."/>
            <person name="Shibahara T."/>
            <person name="Tanaka T."/>
            <person name="Ishii S."/>
            <person name="Yamamoto J."/>
            <person name="Saito K."/>
            <person name="Kawai Y."/>
            <person name="Isono Y."/>
            <person name="Nakamura Y."/>
            <person name="Nagahari K."/>
            <person name="Murakami K."/>
            <person name="Yasuda T."/>
            <person name="Iwayanagi T."/>
            <person name="Wagatsuma M."/>
            <person name="Shiratori A."/>
            <person name="Sudo H."/>
            <person name="Hosoiri T."/>
            <person name="Kaku Y."/>
            <person name="Kodaira H."/>
            <person name="Kondo H."/>
            <person name="Sugawara M."/>
            <person name="Takahashi M."/>
            <person name="Kanda K."/>
            <person name="Yokoi T."/>
            <person name="Furuya T."/>
            <person name="Kikkawa E."/>
            <person name="Omura Y."/>
            <person name="Abe K."/>
            <person name="Kamihara K."/>
            <person name="Katsuta N."/>
            <person name="Sato K."/>
            <person name="Tanikawa M."/>
            <person name="Yamazaki M."/>
            <person name="Ninomiya K."/>
            <person name="Ishibashi T."/>
            <person name="Yamashita H."/>
            <person name="Murakawa K."/>
            <person name="Fujimori K."/>
            <person name="Tanai H."/>
            <person name="Kimata M."/>
            <person name="Watanabe M."/>
            <person name="Hiraoka S."/>
            <person name="Chiba Y."/>
            <person name="Ishida S."/>
            <person name="Ono Y."/>
            <person name="Takiguchi S."/>
            <person name="Watanabe S."/>
            <person name="Yosida M."/>
            <person name="Hotuta T."/>
            <person name="Kusano J."/>
            <person name="Kanehori K."/>
            <person name="Takahashi-Fujii A."/>
            <person name="Hara H."/>
            <person name="Tanase T.-O."/>
            <person name="Nomura Y."/>
            <person name="Togiya S."/>
            <person name="Komai F."/>
            <person name="Hara R."/>
            <person name="Takeuchi K."/>
            <person name="Arita M."/>
            <person name="Imose N."/>
            <person name="Musashino K."/>
            <person name="Yuuki H."/>
            <person name="Oshima A."/>
            <person name="Sasaki N."/>
            <person name="Aotsuka S."/>
            <person name="Yoshikawa Y."/>
            <person name="Matsunawa H."/>
            <person name="Ichihara T."/>
            <person name="Shiohata N."/>
            <person name="Sano S."/>
            <person name="Moriya S."/>
            <person name="Momiyama H."/>
            <person name="Satoh N."/>
            <person name="Takami S."/>
            <person name="Terashima Y."/>
            <person name="Suzuki O."/>
            <person name="Nakagawa S."/>
            <person name="Senoh A."/>
            <person name="Mizoguchi H."/>
            <person name="Goto Y."/>
            <person name="Shimizu F."/>
            <person name="Wakebe H."/>
            <person name="Hishigaki H."/>
            <person name="Watanabe T."/>
            <person name="Sugiyama A."/>
            <person name="Takemoto M."/>
            <person name="Kawakami B."/>
            <person name="Yamazaki M."/>
            <person name="Watanabe K."/>
            <person name="Kumagai A."/>
            <person name="Itakura S."/>
            <person name="Fukuzumi Y."/>
            <person name="Fujimori Y."/>
            <person name="Komiyama M."/>
            <person name="Tashiro H."/>
            <person name="Tanigami A."/>
            <person name="Fujiwara T."/>
            <person name="Ono T."/>
            <person name="Yamada K."/>
            <person name="Fujii Y."/>
            <person name="Ozaki K."/>
            <person name="Hirao M."/>
            <person name="Ohmori Y."/>
            <person name="Kawabata A."/>
            <person name="Hikiji T."/>
            <person name="Kobatake N."/>
            <person name="Inagaki H."/>
            <person name="Ikema Y."/>
            <person name="Okamoto S."/>
            <person name="Okitani R."/>
            <person name="Kawakami T."/>
            <person name="Noguchi S."/>
            <person name="Itoh T."/>
            <person name="Shigeta K."/>
            <person name="Senba T."/>
            <person name="Matsumura K."/>
            <person name="Nakajima Y."/>
            <person name="Mizuno T."/>
            <person name="Morinaga M."/>
            <person name="Sasaki M."/>
            <person name="Togashi T."/>
            <person name="Oyama M."/>
            <person name="Hata H."/>
            <person name="Watanabe M."/>
            <person name="Komatsu T."/>
            <person name="Mizushima-Sugano J."/>
            <person name="Satoh T."/>
            <person name="Shirai Y."/>
            <person name="Takahashi Y."/>
            <person name="Nakagawa K."/>
            <person name="Okumura K."/>
            <person name="Nagase T."/>
            <person name="Nomura N."/>
            <person name="Kikuchi H."/>
            <person name="Masuho Y."/>
            <person name="Yamashita R."/>
            <person name="Nakai K."/>
            <person name="Yada T."/>
            <person name="Nakamura Y."/>
            <person name="Ohara O."/>
            <person name="Isogai T."/>
            <person name="Sugano S."/>
        </authorList>
    </citation>
    <scope>NUCLEOTIDE SEQUENCE [LARGE SCALE MRNA] (ISOFORM 2)</scope>
    <scope>NUCLEOTIDE SEQUENCE [LARGE SCALE MRNA] OF 1164-2226 (ISOFORM 1)</scope>
    <scope>VARIANTS ALA-126 AND SER-1761</scope>
    <source>
        <tissue>Teratocarcinoma</tissue>
        <tissue>Testis</tissue>
        <tissue>Uterus</tissue>
    </source>
</reference>
<reference key="2">
    <citation type="journal article" date="2005" name="Nature">
        <title>DNA sequence and analysis of human chromosome 18.</title>
        <authorList>
            <person name="Nusbaum C."/>
            <person name="Zody M.C."/>
            <person name="Borowsky M.L."/>
            <person name="Kamal M."/>
            <person name="Kodira C.D."/>
            <person name="Taylor T.D."/>
            <person name="Whittaker C.A."/>
            <person name="Chang J.L."/>
            <person name="Cuomo C.A."/>
            <person name="Dewar K."/>
            <person name="FitzGerald M.G."/>
            <person name="Yang X."/>
            <person name="Abouelleil A."/>
            <person name="Allen N.R."/>
            <person name="Anderson S."/>
            <person name="Bloom T."/>
            <person name="Bugalter B."/>
            <person name="Butler J."/>
            <person name="Cook A."/>
            <person name="DeCaprio D."/>
            <person name="Engels R."/>
            <person name="Garber M."/>
            <person name="Gnirke A."/>
            <person name="Hafez N."/>
            <person name="Hall J.L."/>
            <person name="Norman C.H."/>
            <person name="Itoh T."/>
            <person name="Jaffe D.B."/>
            <person name="Kuroki Y."/>
            <person name="Lehoczky J."/>
            <person name="Lui A."/>
            <person name="Macdonald P."/>
            <person name="Mauceli E."/>
            <person name="Mikkelsen T.S."/>
            <person name="Naylor J.W."/>
            <person name="Nicol R."/>
            <person name="Nguyen C."/>
            <person name="Noguchi H."/>
            <person name="O'Leary S.B."/>
            <person name="Piqani B."/>
            <person name="Smith C.L."/>
            <person name="Talamas J.A."/>
            <person name="Topham K."/>
            <person name="Totoki Y."/>
            <person name="Toyoda A."/>
            <person name="Wain H.M."/>
            <person name="Young S.K."/>
            <person name="Zeng Q."/>
            <person name="Zimmer A.R."/>
            <person name="Fujiyama A."/>
            <person name="Hattori M."/>
            <person name="Birren B.W."/>
            <person name="Sakaki Y."/>
            <person name="Lander E.S."/>
        </authorList>
    </citation>
    <scope>NUCLEOTIDE SEQUENCE [LARGE SCALE GENOMIC DNA]</scope>
</reference>
<reference key="3">
    <citation type="journal article" date="2007" name="BMC Genomics">
        <title>The full-ORF clone resource of the German cDNA consortium.</title>
        <authorList>
            <person name="Bechtel S."/>
            <person name="Rosenfelder H."/>
            <person name="Duda A."/>
            <person name="Schmidt C.P."/>
            <person name="Ernst U."/>
            <person name="Wellenreuther R."/>
            <person name="Mehrle A."/>
            <person name="Schuster C."/>
            <person name="Bahr A."/>
            <person name="Bloecker H."/>
            <person name="Heubner D."/>
            <person name="Hoerlein A."/>
            <person name="Michel G."/>
            <person name="Wedler H."/>
            <person name="Koehrer K."/>
            <person name="Ottenwaelder B."/>
            <person name="Poustka A."/>
            <person name="Wiemann S."/>
            <person name="Schupp I."/>
        </authorList>
    </citation>
    <scope>NUCLEOTIDE SEQUENCE [LARGE SCALE MRNA] OF 211-2226 (ISOFORM 4)</scope>
    <scope>NUCLEOTIDE SEQUENCE [LARGE SCALE MRNA] OF 2017-2226 (ISOFORM 3)</scope>
    <source>
        <tissue>Esophageal carcinoma</tissue>
        <tissue>Testis</tissue>
    </source>
</reference>
<reference key="4">
    <citation type="journal article" date="2004" name="Genome Res.">
        <title>The status, quality, and expansion of the NIH full-length cDNA project: the Mammalian Gene Collection (MGC).</title>
        <authorList>
            <consortium name="The MGC Project Team"/>
        </authorList>
    </citation>
    <scope>NUCLEOTIDE SEQUENCE [LARGE SCALE MRNA] OF 343-2226 (ISOFORM 1)</scope>
    <scope>NUCLEOTIDE SEQUENCE [LARGE SCALE MRNA] OF 2069-2226 (ISOFORM 3)</scope>
    <source>
        <tissue>Kidney</tissue>
        <tissue>Pancreas</tissue>
        <tissue>PNS</tissue>
        <tissue>Uterus</tissue>
    </source>
</reference>
<reference key="5">
    <citation type="journal article" date="2003" name="Nature">
        <title>Proteomic characterization of the human centrosome by protein correlation profiling.</title>
        <authorList>
            <person name="Andersen J.S."/>
            <person name="Wilkinson C.J."/>
            <person name="Mayor T."/>
            <person name="Mortensen P."/>
            <person name="Nigg E.A."/>
            <person name="Mann M."/>
        </authorList>
    </citation>
    <scope>IDENTIFICATION BY MASS SPECTROMETRY</scope>
    <scope>SUBCELLULAR LOCATION [LARGE SCALE ANALYSIS]</scope>
    <source>
        <tissue>Lymphoblast</tissue>
    </source>
</reference>
<reference key="6">
    <citation type="journal article" date="2009" name="Science">
        <title>Lysine acetylation targets protein complexes and co-regulates major cellular functions.</title>
        <authorList>
            <person name="Choudhary C."/>
            <person name="Kumar C."/>
            <person name="Gnad F."/>
            <person name="Nielsen M.L."/>
            <person name="Rehman M."/>
            <person name="Walther T.C."/>
            <person name="Olsen J.V."/>
            <person name="Mann M."/>
        </authorList>
    </citation>
    <scope>ACETYLATION [LARGE SCALE ANALYSIS] AT LYS-811</scope>
    <scope>IDENTIFICATION BY MASS SPECTROMETRY [LARGE SCALE ANALYSIS]</scope>
</reference>
<reference key="7">
    <citation type="journal article" date="2012" name="Am. J. Hum. Genet.">
        <title>RTTN mutations link primary cilia function to organization of the human cerebral cortex.</title>
        <authorList>
            <person name="Kheradmand Kia S."/>
            <person name="Verbeek E."/>
            <person name="Engelen E."/>
            <person name="Schot R."/>
            <person name="Poot R.A."/>
            <person name="de Coo I.F."/>
            <person name="Lequin M.H."/>
            <person name="Poulton C.J."/>
            <person name="Pourfarzad F."/>
            <person name="Grosveld F.G."/>
            <person name="Brehm A."/>
            <person name="de Wit M.C."/>
            <person name="Oegema R."/>
            <person name="Dobyns W.B."/>
            <person name="Verheijen F.W."/>
            <person name="Mancini G.M."/>
        </authorList>
    </citation>
    <scope>SUBCELLULAR LOCATION</scope>
    <scope>FUNCTION</scope>
    <scope>VARIANTS MSSP TYR-27 AND PHE-932</scope>
</reference>
<reference key="8">
    <citation type="journal article" date="2013" name="J. Proteome Res.">
        <title>Toward a comprehensive characterization of a human cancer cell phosphoproteome.</title>
        <authorList>
            <person name="Zhou H."/>
            <person name="Di Palma S."/>
            <person name="Preisinger C."/>
            <person name="Peng M."/>
            <person name="Polat A.N."/>
            <person name="Heck A.J."/>
            <person name="Mohammed S."/>
        </authorList>
    </citation>
    <scope>PHOSPHORYLATION [LARGE SCALE ANALYSIS] AT SER-310</scope>
    <scope>IDENTIFICATION BY MASS SPECTROMETRY [LARGE SCALE ANALYSIS]</scope>
    <source>
        <tissue>Cervix carcinoma</tissue>
        <tissue>Erythroleukemia</tissue>
    </source>
</reference>
<reference key="9">
    <citation type="journal article" date="2018" name="Elife">
        <title>PPP1R35 is a novel centrosomal protein that regulates centriole length in concert with the microcephaly protein RTTN.</title>
        <authorList>
            <person name="Sydor A.M."/>
            <person name="Coyaud E."/>
            <person name="Rovelli C."/>
            <person name="Laurent E."/>
            <person name="Liu H."/>
            <person name="Raught B."/>
            <person name="Mennella V."/>
        </authorList>
    </citation>
    <scope>INTERACTION WITH PPP1R35</scope>
</reference>